<reference key="1">
    <citation type="journal article" date="2002" name="Nucleic Acids Res.">
        <title>Genome sequence of Oceanobacillus iheyensis isolated from the Iheya Ridge and its unexpected adaptive capabilities to extreme environments.</title>
        <authorList>
            <person name="Takami H."/>
            <person name="Takaki Y."/>
            <person name="Uchiyama I."/>
        </authorList>
    </citation>
    <scope>NUCLEOTIDE SEQUENCE [LARGE SCALE GENOMIC DNA]</scope>
    <source>
        <strain>DSM 14371 / CIP 107618 / JCM 11309 / KCTC 3954 / HTE831</strain>
    </source>
</reference>
<comment type="function">
    <text evidence="1">With S4 and S12 plays an important role in translational accuracy.</text>
</comment>
<comment type="function">
    <text evidence="1">Located at the back of the 30S subunit body where it stabilizes the conformation of the head with respect to the body.</text>
</comment>
<comment type="subunit">
    <text evidence="1">Part of the 30S ribosomal subunit. Contacts proteins S4 and S8.</text>
</comment>
<comment type="domain">
    <text>The N-terminal domain interacts with the head of the 30S subunit; the C-terminal domain interacts with the body and contacts protein S4. The interaction surface between S4 and S5 is involved in control of translational fidelity.</text>
</comment>
<comment type="similarity">
    <text evidence="1">Belongs to the universal ribosomal protein uS5 family.</text>
</comment>
<feature type="chain" id="PRO_0000131563" description="Small ribosomal subunit protein uS5">
    <location>
        <begin position="1"/>
        <end position="167"/>
    </location>
</feature>
<feature type="domain" description="S5 DRBM" evidence="1">
    <location>
        <begin position="12"/>
        <end position="75"/>
    </location>
</feature>
<evidence type="ECO:0000255" key="1">
    <source>
        <dbReference type="HAMAP-Rule" id="MF_01307"/>
    </source>
</evidence>
<evidence type="ECO:0000305" key="2"/>
<dbReference type="EMBL" id="BA000028">
    <property type="protein sequence ID" value="BAC12092.1"/>
    <property type="molecule type" value="Genomic_DNA"/>
</dbReference>
<dbReference type="RefSeq" id="WP_011064539.1">
    <property type="nucleotide sequence ID" value="NC_004193.1"/>
</dbReference>
<dbReference type="SMR" id="P59123"/>
<dbReference type="STRING" id="221109.gene:10732326"/>
<dbReference type="KEGG" id="oih:OB0136"/>
<dbReference type="eggNOG" id="COG0098">
    <property type="taxonomic scope" value="Bacteria"/>
</dbReference>
<dbReference type="HOGENOM" id="CLU_065898_2_2_9"/>
<dbReference type="OrthoDB" id="9809045at2"/>
<dbReference type="PhylomeDB" id="P59123"/>
<dbReference type="Proteomes" id="UP000000822">
    <property type="component" value="Chromosome"/>
</dbReference>
<dbReference type="GO" id="GO:0015935">
    <property type="term" value="C:small ribosomal subunit"/>
    <property type="evidence" value="ECO:0007669"/>
    <property type="project" value="InterPro"/>
</dbReference>
<dbReference type="GO" id="GO:0019843">
    <property type="term" value="F:rRNA binding"/>
    <property type="evidence" value="ECO:0007669"/>
    <property type="project" value="UniProtKB-UniRule"/>
</dbReference>
<dbReference type="GO" id="GO:0003735">
    <property type="term" value="F:structural constituent of ribosome"/>
    <property type="evidence" value="ECO:0007669"/>
    <property type="project" value="InterPro"/>
</dbReference>
<dbReference type="GO" id="GO:0006412">
    <property type="term" value="P:translation"/>
    <property type="evidence" value="ECO:0007669"/>
    <property type="project" value="UniProtKB-UniRule"/>
</dbReference>
<dbReference type="FunFam" id="3.30.160.20:FF:000001">
    <property type="entry name" value="30S ribosomal protein S5"/>
    <property type="match status" value="1"/>
</dbReference>
<dbReference type="FunFam" id="3.30.230.10:FF:000002">
    <property type="entry name" value="30S ribosomal protein S5"/>
    <property type="match status" value="1"/>
</dbReference>
<dbReference type="Gene3D" id="3.30.160.20">
    <property type="match status" value="1"/>
</dbReference>
<dbReference type="Gene3D" id="3.30.230.10">
    <property type="match status" value="1"/>
</dbReference>
<dbReference type="HAMAP" id="MF_01307_B">
    <property type="entry name" value="Ribosomal_uS5_B"/>
    <property type="match status" value="1"/>
</dbReference>
<dbReference type="InterPro" id="IPR020568">
    <property type="entry name" value="Ribosomal_Su5_D2-typ_SF"/>
</dbReference>
<dbReference type="InterPro" id="IPR000851">
    <property type="entry name" value="Ribosomal_uS5"/>
</dbReference>
<dbReference type="InterPro" id="IPR005712">
    <property type="entry name" value="Ribosomal_uS5_bac-type"/>
</dbReference>
<dbReference type="InterPro" id="IPR005324">
    <property type="entry name" value="Ribosomal_uS5_C"/>
</dbReference>
<dbReference type="InterPro" id="IPR013810">
    <property type="entry name" value="Ribosomal_uS5_N"/>
</dbReference>
<dbReference type="InterPro" id="IPR018192">
    <property type="entry name" value="Ribosomal_uS5_N_CS"/>
</dbReference>
<dbReference type="InterPro" id="IPR014721">
    <property type="entry name" value="Ribsml_uS5_D2-typ_fold_subgr"/>
</dbReference>
<dbReference type="NCBIfam" id="TIGR01021">
    <property type="entry name" value="rpsE_bact"/>
    <property type="match status" value="1"/>
</dbReference>
<dbReference type="PANTHER" id="PTHR48277">
    <property type="entry name" value="MITOCHONDRIAL RIBOSOMAL PROTEIN S5"/>
    <property type="match status" value="1"/>
</dbReference>
<dbReference type="PANTHER" id="PTHR48277:SF1">
    <property type="entry name" value="MITOCHONDRIAL RIBOSOMAL PROTEIN S5"/>
    <property type="match status" value="1"/>
</dbReference>
<dbReference type="Pfam" id="PF00333">
    <property type="entry name" value="Ribosomal_S5"/>
    <property type="match status" value="1"/>
</dbReference>
<dbReference type="Pfam" id="PF03719">
    <property type="entry name" value="Ribosomal_S5_C"/>
    <property type="match status" value="1"/>
</dbReference>
<dbReference type="SUPFAM" id="SSF54768">
    <property type="entry name" value="dsRNA-binding domain-like"/>
    <property type="match status" value="1"/>
</dbReference>
<dbReference type="SUPFAM" id="SSF54211">
    <property type="entry name" value="Ribosomal protein S5 domain 2-like"/>
    <property type="match status" value="1"/>
</dbReference>
<dbReference type="PROSITE" id="PS00585">
    <property type="entry name" value="RIBOSOMAL_S5"/>
    <property type="match status" value="1"/>
</dbReference>
<dbReference type="PROSITE" id="PS50881">
    <property type="entry name" value="S5_DSRBD"/>
    <property type="match status" value="1"/>
</dbReference>
<gene>
    <name evidence="1" type="primary">rpsE</name>
    <name type="ordered locus">OB0136</name>
</gene>
<keyword id="KW-1185">Reference proteome</keyword>
<keyword id="KW-0687">Ribonucleoprotein</keyword>
<keyword id="KW-0689">Ribosomal protein</keyword>
<keyword id="KW-0694">RNA-binding</keyword>
<keyword id="KW-0699">rRNA-binding</keyword>
<sequence length="167" mass="17496">MNTNIDPNKLDLEERVVTVNRVAKVVKGGRRFRFAALVVVGDKNGHVGFGTGKAQEVPEAIKKAVDDAKKNLISVPIVGTTIPHEIHGQFGSGNVLMKPAAEGTGVISGGPVRAILELAGVGDILTKSLGSNTPINMIRATLNGLTNLKTAEDVAKLRGKSVEELLG</sequence>
<proteinExistence type="inferred from homology"/>
<protein>
    <recommendedName>
        <fullName evidence="1">Small ribosomal subunit protein uS5</fullName>
    </recommendedName>
    <alternativeName>
        <fullName evidence="2">30S ribosomal protein S5</fullName>
    </alternativeName>
</protein>
<name>RS5_OCEIH</name>
<organism>
    <name type="scientific">Oceanobacillus iheyensis (strain DSM 14371 / CIP 107618 / JCM 11309 / KCTC 3954 / HTE831)</name>
    <dbReference type="NCBI Taxonomy" id="221109"/>
    <lineage>
        <taxon>Bacteria</taxon>
        <taxon>Bacillati</taxon>
        <taxon>Bacillota</taxon>
        <taxon>Bacilli</taxon>
        <taxon>Bacillales</taxon>
        <taxon>Bacillaceae</taxon>
        <taxon>Oceanobacillus</taxon>
    </lineage>
</organism>
<accession>P59123</accession>